<proteinExistence type="inferred from homology"/>
<gene>
    <name evidence="9" type="primary">npp-18</name>
    <name type="ORF">Y43F4B.4</name>
</gene>
<name>SEH1_CAEEL</name>
<organism>
    <name type="scientific">Caenorhabditis elegans</name>
    <dbReference type="NCBI Taxonomy" id="6239"/>
    <lineage>
        <taxon>Eukaryota</taxon>
        <taxon>Metazoa</taxon>
        <taxon>Ecdysozoa</taxon>
        <taxon>Nematoda</taxon>
        <taxon>Chromadorea</taxon>
        <taxon>Rhabditida</taxon>
        <taxon>Rhabditina</taxon>
        <taxon>Rhabditomorpha</taxon>
        <taxon>Rhabditoidea</taxon>
        <taxon>Rhabditidae</taxon>
        <taxon>Peloderinae</taxon>
        <taxon>Caenorhabditis</taxon>
    </lineage>
</organism>
<keyword id="KW-0458">Lysosome</keyword>
<keyword id="KW-0472">Membrane</keyword>
<keyword id="KW-0509">mRNA transport</keyword>
<keyword id="KW-0906">Nuclear pore complex</keyword>
<keyword id="KW-0539">Nucleus</keyword>
<keyword id="KW-0653">Protein transport</keyword>
<keyword id="KW-1185">Reference proteome</keyword>
<keyword id="KW-0677">Repeat</keyword>
<keyword id="KW-0811">Translocation</keyword>
<keyword id="KW-0813">Transport</keyword>
<keyword id="KW-0853">WD repeat</keyword>
<sequence>MQEDDSVKPFQTVGAHRDLIHCVSFDPHGRRMATCASDMTMAIWDRKPDGNWRRSAHWKCHGGAVWRVIWAHPEFGQIVATCSYDRTIVIWEEQIVRSEKDLKQKESQWIRRTIISDNRSDVTDICFSPRHLGLMMASCNVLGTVRIYEAPDIVDASRWNLIHELQAFHTRCGCVTWSLSRMHRPLIAVGSDEKKAENKKRVVIYENIDGLRKWQRINSLVFDLPCPITDLKFSPISMVDSHQLAVASGDVHVYNIKVARSAILEEDGVENPIQLADYNLIKVALLGDHRKAWRLRYNLMGSVISSTSLDGTLRSWKSLFVNQWVKLSEMNVDDYVPSPEEVRAFISSKTTERLPSQLEKTYF</sequence>
<accession>O45933</accession>
<evidence type="ECO:0000250" key="1">
    <source>
        <dbReference type="UniProtKB" id="P55735"/>
    </source>
</evidence>
<evidence type="ECO:0000250" key="2">
    <source>
        <dbReference type="UniProtKB" id="Q96EE3"/>
    </source>
</evidence>
<evidence type="ECO:0000255" key="3"/>
<evidence type="ECO:0000269" key="4">
    <source>
    </source>
</evidence>
<evidence type="ECO:0000269" key="5">
    <source>
    </source>
</evidence>
<evidence type="ECO:0000303" key="6">
    <source>
    </source>
</evidence>
<evidence type="ECO:0000305" key="7"/>
<evidence type="ECO:0000312" key="8">
    <source>
        <dbReference type="EMBL" id="CAA16333.1"/>
    </source>
</evidence>
<evidence type="ECO:0000312" key="9">
    <source>
        <dbReference type="WormBase" id="Y43F4B.4"/>
    </source>
</evidence>
<protein>
    <recommendedName>
        <fullName evidence="2">Nucleoporin SEH1</fullName>
        <shortName evidence="2">CeSeh1</shortName>
    </recommendedName>
    <alternativeName>
        <fullName evidence="7">GATOR complex protein SEH1</fullName>
    </alternativeName>
    <alternativeName>
        <fullName evidence="6">Nuclear pore complex protein 18</fullName>
    </alternativeName>
    <alternativeName>
        <fullName evidence="2">SEC13-like protein</fullName>
    </alternativeName>
</protein>
<feature type="chain" id="PRO_0000405543" description="Nucleoporin SEH1">
    <location>
        <begin position="1"/>
        <end position="363"/>
    </location>
</feature>
<feature type="repeat" description="WD 1" evidence="3">
    <location>
        <begin position="15"/>
        <end position="54"/>
    </location>
</feature>
<feature type="repeat" description="WD 2" evidence="3">
    <location>
        <begin position="60"/>
        <end position="101"/>
    </location>
</feature>
<feature type="repeat" description="WD 3" evidence="3">
    <location>
        <begin position="108"/>
        <end position="149"/>
    </location>
</feature>
<feature type="repeat" description="WD 4" evidence="3">
    <location>
        <begin position="158"/>
        <end position="206"/>
    </location>
</feature>
<feature type="repeat" description="WD 5" evidence="3">
    <location>
        <begin position="223"/>
        <end position="264"/>
    </location>
</feature>
<feature type="repeat" description="WD 6" evidence="3">
    <location>
        <begin position="287"/>
        <end position="326"/>
    </location>
</feature>
<dbReference type="EMBL" id="AL021481">
    <property type="protein sequence ID" value="CAA16333.1"/>
    <property type="molecule type" value="Genomic_DNA"/>
</dbReference>
<dbReference type="PIR" id="T26842">
    <property type="entry name" value="T26842"/>
</dbReference>
<dbReference type="RefSeq" id="NP_499740.1">
    <property type="nucleotide sequence ID" value="NM_067339.6"/>
</dbReference>
<dbReference type="SMR" id="O45933"/>
<dbReference type="BioGRID" id="41918">
    <property type="interactions" value="8"/>
</dbReference>
<dbReference type="FunCoup" id="O45933">
    <property type="interactions" value="3209"/>
</dbReference>
<dbReference type="STRING" id="6239.Y43F4B.4.1"/>
<dbReference type="PaxDb" id="6239-Y43F4B.4"/>
<dbReference type="PeptideAtlas" id="O45933"/>
<dbReference type="EnsemblMetazoa" id="Y43F4B.4.1">
    <property type="protein sequence ID" value="Y43F4B.4.1"/>
    <property type="gene ID" value="WBGene00003804"/>
</dbReference>
<dbReference type="GeneID" id="176748"/>
<dbReference type="KEGG" id="cel:CELE_Y43F4B.4"/>
<dbReference type="UCSC" id="Y43F4B.4">
    <property type="organism name" value="c. elegans"/>
</dbReference>
<dbReference type="AGR" id="WB:WBGene00003804"/>
<dbReference type="CTD" id="176748"/>
<dbReference type="WormBase" id="Y43F4B.4">
    <property type="protein sequence ID" value="CE16629"/>
    <property type="gene ID" value="WBGene00003804"/>
    <property type="gene designation" value="npp-18"/>
</dbReference>
<dbReference type="eggNOG" id="KOG2445">
    <property type="taxonomic scope" value="Eukaryota"/>
</dbReference>
<dbReference type="GeneTree" id="ENSGT00940000153393"/>
<dbReference type="HOGENOM" id="CLU_032441_1_1_1"/>
<dbReference type="InParanoid" id="O45933"/>
<dbReference type="OMA" id="NAPTRRW"/>
<dbReference type="OrthoDB" id="364224at2759"/>
<dbReference type="PhylomeDB" id="O45933"/>
<dbReference type="Reactome" id="R-CEL-9615933">
    <property type="pathway name" value="Postmitotic nuclear pore complex (NPC) reformation"/>
</dbReference>
<dbReference type="PRO" id="PR:O45933"/>
<dbReference type="Proteomes" id="UP000001940">
    <property type="component" value="Chromosome III"/>
</dbReference>
<dbReference type="Bgee" id="WBGene00003804">
    <property type="expression patterns" value="Expressed in germ line (C elegans) and 4 other cell types or tissues"/>
</dbReference>
<dbReference type="GO" id="GO:0005765">
    <property type="term" value="C:lysosomal membrane"/>
    <property type="evidence" value="ECO:0007669"/>
    <property type="project" value="UniProtKB-SubCell"/>
</dbReference>
<dbReference type="GO" id="GO:0031080">
    <property type="term" value="C:nuclear pore outer ring"/>
    <property type="evidence" value="ECO:0000318"/>
    <property type="project" value="GO_Central"/>
</dbReference>
<dbReference type="GO" id="GO:0035859">
    <property type="term" value="C:Seh1-associated complex"/>
    <property type="evidence" value="ECO:0000318"/>
    <property type="project" value="GO_Central"/>
</dbReference>
<dbReference type="GO" id="GO:0005198">
    <property type="term" value="F:structural molecule activity"/>
    <property type="evidence" value="ECO:0007669"/>
    <property type="project" value="InterPro"/>
</dbReference>
<dbReference type="GO" id="GO:0034198">
    <property type="term" value="P:cellular response to amino acid starvation"/>
    <property type="evidence" value="ECO:0000318"/>
    <property type="project" value="GO_Central"/>
</dbReference>
<dbReference type="GO" id="GO:0051028">
    <property type="term" value="P:mRNA transport"/>
    <property type="evidence" value="ECO:0007669"/>
    <property type="project" value="UniProtKB-KW"/>
</dbReference>
<dbReference type="GO" id="GO:1904263">
    <property type="term" value="P:positive regulation of TORC1 signaling"/>
    <property type="evidence" value="ECO:0000318"/>
    <property type="project" value="GO_Central"/>
</dbReference>
<dbReference type="GO" id="GO:0015031">
    <property type="term" value="P:protein transport"/>
    <property type="evidence" value="ECO:0007669"/>
    <property type="project" value="UniProtKB-KW"/>
</dbReference>
<dbReference type="Gene3D" id="2.130.10.10">
    <property type="entry name" value="YVTN repeat-like/Quinoprotein amine dehydrogenase"/>
    <property type="match status" value="1"/>
</dbReference>
<dbReference type="InterPro" id="IPR037363">
    <property type="entry name" value="Sec13/Seh1_fam"/>
</dbReference>
<dbReference type="InterPro" id="IPR015943">
    <property type="entry name" value="WD40/YVTN_repeat-like_dom_sf"/>
</dbReference>
<dbReference type="InterPro" id="IPR036322">
    <property type="entry name" value="WD40_repeat_dom_sf"/>
</dbReference>
<dbReference type="InterPro" id="IPR001680">
    <property type="entry name" value="WD40_rpt"/>
</dbReference>
<dbReference type="PANTHER" id="PTHR11024">
    <property type="entry name" value="NUCLEAR PORE COMPLEX PROTEIN SEC13 / SEH1 FAMILY MEMBER"/>
    <property type="match status" value="1"/>
</dbReference>
<dbReference type="PANTHER" id="PTHR11024:SF3">
    <property type="entry name" value="NUCLEOPORIN SEH1"/>
    <property type="match status" value="1"/>
</dbReference>
<dbReference type="Pfam" id="PF00400">
    <property type="entry name" value="WD40"/>
    <property type="match status" value="2"/>
</dbReference>
<dbReference type="SMART" id="SM00320">
    <property type="entry name" value="WD40"/>
    <property type="match status" value="6"/>
</dbReference>
<dbReference type="SUPFAM" id="SSF50978">
    <property type="entry name" value="WD40 repeat-like"/>
    <property type="match status" value="1"/>
</dbReference>
<dbReference type="PROSITE" id="PS50082">
    <property type="entry name" value="WD_REPEATS_2"/>
    <property type="match status" value="1"/>
</dbReference>
<dbReference type="PROSITE" id="PS50294">
    <property type="entry name" value="WD_REPEATS_REGION"/>
    <property type="match status" value="1"/>
</dbReference>
<comment type="function">
    <text evidence="4">Probable component of the nuclear pore complex (NPC) which is involved in the trafficking of macromolecules between the cytoplasm and nucleus.</text>
</comment>
<comment type="function">
    <text evidence="1">As a component of the GATOR complex may function in the amino acid-sensing branch of the TORC1 signaling pathway.</text>
</comment>
<comment type="subunit">
    <text evidence="2">Component of the nuclear pore complex (NPC). Probably part of the GATOR complex.</text>
</comment>
<comment type="subcellular location">
    <subcellularLocation>
        <location evidence="2">Nucleus</location>
        <location evidence="2">Nuclear pore complex</location>
    </subcellularLocation>
    <subcellularLocation>
        <location evidence="2">Lysosome membrane</location>
    </subcellularLocation>
    <subcellularLocation>
        <location evidence="5">Nucleus envelope</location>
    </subcellularLocation>
</comment>
<comment type="disruption phenotype">
    <text evidence="4">No visible phenotype.</text>
</comment>
<comment type="similarity">
    <text evidence="3">Belongs to the WD repeat SEC13 family.</text>
</comment>
<reference evidence="8" key="1">
    <citation type="journal article" date="1998" name="Science">
        <title>Genome sequence of the nematode C. elegans: a platform for investigating biology.</title>
        <authorList>
            <consortium name="The C. elegans sequencing consortium"/>
        </authorList>
    </citation>
    <scope>NUCLEOTIDE SEQUENCE [LARGE SCALE GENOMIC DNA]</scope>
    <source>
        <strain>Bristol N2</strain>
    </source>
</reference>
<reference evidence="7" key="2">
    <citation type="journal article" date="2003" name="Mol. Biol. Cell">
        <title>Caenorhabditis elegans nucleoporins Nup93 and Nup205 determine the limit of nuclear pore complex size exclusion in vivo.</title>
        <authorList>
            <person name="Galy V."/>
            <person name="Mattaj I.W."/>
            <person name="Askjaer P."/>
        </authorList>
    </citation>
    <scope>FUNCTION</scope>
    <scope>DISRUPTION PHENOTYPE</scope>
</reference>
<reference key="3">
    <citation type="journal article" date="2022" name="Elife">
        <title>Ndc1 drives nuclear pore complex assembly independent of membrane biogenesis to promote nuclear formation and growth.</title>
        <authorList>
            <person name="Mauro M.S."/>
            <person name="Celma G."/>
            <person name="Zimyanin V."/>
            <person name="Magaj M.M."/>
            <person name="Gibson K.H."/>
            <person name="Redemann S."/>
            <person name="Bahmanyar S."/>
        </authorList>
    </citation>
    <scope>SUBCELLULAR LOCATION</scope>
</reference>